<sequence length="141" mass="15593">MQLTSFTDYGLRALIYMASLPEGRMTSISEVTDVYGVSRNHMVKIINQLSRAGYVTAVRGKNGGIRLGKPASAIRIGDVVRELEPLSLVNCSSEFCHITPACRLKQALSKAVQSFLTELDNYTLADLVEENQPLYKLLLVE</sequence>
<accession>B7NTN4</accession>
<gene>
    <name evidence="1" type="primary">nsrR</name>
    <name type="ordered locus">ECIAI39_4643</name>
</gene>
<proteinExistence type="inferred from homology"/>
<reference key="1">
    <citation type="journal article" date="2009" name="PLoS Genet.">
        <title>Organised genome dynamics in the Escherichia coli species results in highly diverse adaptive paths.</title>
        <authorList>
            <person name="Touchon M."/>
            <person name="Hoede C."/>
            <person name="Tenaillon O."/>
            <person name="Barbe V."/>
            <person name="Baeriswyl S."/>
            <person name="Bidet P."/>
            <person name="Bingen E."/>
            <person name="Bonacorsi S."/>
            <person name="Bouchier C."/>
            <person name="Bouvet O."/>
            <person name="Calteau A."/>
            <person name="Chiapello H."/>
            <person name="Clermont O."/>
            <person name="Cruveiller S."/>
            <person name="Danchin A."/>
            <person name="Diard M."/>
            <person name="Dossat C."/>
            <person name="Karoui M.E."/>
            <person name="Frapy E."/>
            <person name="Garry L."/>
            <person name="Ghigo J.M."/>
            <person name="Gilles A.M."/>
            <person name="Johnson J."/>
            <person name="Le Bouguenec C."/>
            <person name="Lescat M."/>
            <person name="Mangenot S."/>
            <person name="Martinez-Jehanne V."/>
            <person name="Matic I."/>
            <person name="Nassif X."/>
            <person name="Oztas S."/>
            <person name="Petit M.A."/>
            <person name="Pichon C."/>
            <person name="Rouy Z."/>
            <person name="Ruf C.S."/>
            <person name="Schneider D."/>
            <person name="Tourret J."/>
            <person name="Vacherie B."/>
            <person name="Vallenet D."/>
            <person name="Medigue C."/>
            <person name="Rocha E.P.C."/>
            <person name="Denamur E."/>
        </authorList>
    </citation>
    <scope>NUCLEOTIDE SEQUENCE [LARGE SCALE GENOMIC DNA]</scope>
    <source>
        <strain>IAI39 / ExPEC</strain>
    </source>
</reference>
<organism>
    <name type="scientific">Escherichia coli O7:K1 (strain IAI39 / ExPEC)</name>
    <dbReference type="NCBI Taxonomy" id="585057"/>
    <lineage>
        <taxon>Bacteria</taxon>
        <taxon>Pseudomonadati</taxon>
        <taxon>Pseudomonadota</taxon>
        <taxon>Gammaproteobacteria</taxon>
        <taxon>Enterobacterales</taxon>
        <taxon>Enterobacteriaceae</taxon>
        <taxon>Escherichia</taxon>
    </lineage>
</organism>
<keyword id="KW-0001">2Fe-2S</keyword>
<keyword id="KW-0238">DNA-binding</keyword>
<keyword id="KW-0408">Iron</keyword>
<keyword id="KW-0411">Iron-sulfur</keyword>
<keyword id="KW-0479">Metal-binding</keyword>
<keyword id="KW-0678">Repressor</keyword>
<keyword id="KW-0804">Transcription</keyword>
<keyword id="KW-0805">Transcription regulation</keyword>
<comment type="function">
    <text evidence="1">Nitric oxide-sensitive repressor of genes involved in protecting the cell against nitrosative stress. May require iron for activity.</text>
</comment>
<comment type="cofactor">
    <cofactor evidence="1">
        <name>[2Fe-2S] cluster</name>
        <dbReference type="ChEBI" id="CHEBI:190135"/>
    </cofactor>
    <text evidence="1">Binds 1 [2Fe-2S] cluster per subunit.</text>
</comment>
<feature type="chain" id="PRO_1000138117" description="HTH-type transcriptional repressor NsrR">
    <location>
        <begin position="1"/>
        <end position="141"/>
    </location>
</feature>
<feature type="domain" description="HTH rrf2-type" evidence="1">
    <location>
        <begin position="2"/>
        <end position="129"/>
    </location>
</feature>
<feature type="DNA-binding region" description="H-T-H motif" evidence="1">
    <location>
        <begin position="28"/>
        <end position="51"/>
    </location>
</feature>
<feature type="binding site" evidence="1">
    <location>
        <position position="91"/>
    </location>
    <ligand>
        <name>[2Fe-2S] cluster</name>
        <dbReference type="ChEBI" id="CHEBI:190135"/>
    </ligand>
</feature>
<feature type="binding site" evidence="1">
    <location>
        <position position="96"/>
    </location>
    <ligand>
        <name>[2Fe-2S] cluster</name>
        <dbReference type="ChEBI" id="CHEBI:190135"/>
    </ligand>
</feature>
<feature type="binding site" evidence="1">
    <location>
        <position position="102"/>
    </location>
    <ligand>
        <name>[2Fe-2S] cluster</name>
        <dbReference type="ChEBI" id="CHEBI:190135"/>
    </ligand>
</feature>
<dbReference type="EMBL" id="CU928164">
    <property type="protein sequence ID" value="CAR20741.1"/>
    <property type="molecule type" value="Genomic_DNA"/>
</dbReference>
<dbReference type="RefSeq" id="WP_001177639.1">
    <property type="nucleotide sequence ID" value="NC_011750.1"/>
</dbReference>
<dbReference type="RefSeq" id="YP_002410504.1">
    <property type="nucleotide sequence ID" value="NC_011750.1"/>
</dbReference>
<dbReference type="SMR" id="B7NTN4"/>
<dbReference type="STRING" id="585057.ECIAI39_4643"/>
<dbReference type="GeneID" id="93777643"/>
<dbReference type="KEGG" id="ect:ECIAI39_4643"/>
<dbReference type="PATRIC" id="fig|585057.6.peg.4789"/>
<dbReference type="HOGENOM" id="CLU_107144_2_1_6"/>
<dbReference type="Proteomes" id="UP000000749">
    <property type="component" value="Chromosome"/>
</dbReference>
<dbReference type="GO" id="GO:0005829">
    <property type="term" value="C:cytosol"/>
    <property type="evidence" value="ECO:0007669"/>
    <property type="project" value="TreeGrafter"/>
</dbReference>
<dbReference type="GO" id="GO:0051537">
    <property type="term" value="F:2 iron, 2 sulfur cluster binding"/>
    <property type="evidence" value="ECO:0007669"/>
    <property type="project" value="UniProtKB-KW"/>
</dbReference>
<dbReference type="GO" id="GO:0003700">
    <property type="term" value="F:DNA-binding transcription factor activity"/>
    <property type="evidence" value="ECO:0007669"/>
    <property type="project" value="UniProtKB-UniRule"/>
</dbReference>
<dbReference type="GO" id="GO:0003690">
    <property type="term" value="F:double-stranded DNA binding"/>
    <property type="evidence" value="ECO:0007669"/>
    <property type="project" value="UniProtKB-UniRule"/>
</dbReference>
<dbReference type="GO" id="GO:0005506">
    <property type="term" value="F:iron ion binding"/>
    <property type="evidence" value="ECO:0007669"/>
    <property type="project" value="UniProtKB-UniRule"/>
</dbReference>
<dbReference type="GO" id="GO:0045892">
    <property type="term" value="P:negative regulation of DNA-templated transcription"/>
    <property type="evidence" value="ECO:0007669"/>
    <property type="project" value="InterPro"/>
</dbReference>
<dbReference type="FunFam" id="1.10.10.10:FF:000105">
    <property type="entry name" value="HTH-type transcriptional repressor NsrR"/>
    <property type="match status" value="1"/>
</dbReference>
<dbReference type="Gene3D" id="1.10.10.10">
    <property type="entry name" value="Winged helix-like DNA-binding domain superfamily/Winged helix DNA-binding domain"/>
    <property type="match status" value="1"/>
</dbReference>
<dbReference type="HAMAP" id="MF_01177">
    <property type="entry name" value="HTH_type_NsrR"/>
    <property type="match status" value="1"/>
</dbReference>
<dbReference type="InterPro" id="IPR030489">
    <property type="entry name" value="TR_Rrf2-type_CS"/>
</dbReference>
<dbReference type="InterPro" id="IPR000944">
    <property type="entry name" value="Tscrpt_reg_Rrf2"/>
</dbReference>
<dbReference type="InterPro" id="IPR023761">
    <property type="entry name" value="Tscrpt_rep_HTH_NsrR"/>
</dbReference>
<dbReference type="InterPro" id="IPR036388">
    <property type="entry name" value="WH-like_DNA-bd_sf"/>
</dbReference>
<dbReference type="InterPro" id="IPR036390">
    <property type="entry name" value="WH_DNA-bd_sf"/>
</dbReference>
<dbReference type="NCBIfam" id="NF008240">
    <property type="entry name" value="PRK11014.1"/>
    <property type="match status" value="1"/>
</dbReference>
<dbReference type="NCBIfam" id="TIGR00738">
    <property type="entry name" value="rrf2_super"/>
    <property type="match status" value="1"/>
</dbReference>
<dbReference type="PANTHER" id="PTHR33221:SF4">
    <property type="entry name" value="HTH-TYPE TRANSCRIPTIONAL REPRESSOR NSRR"/>
    <property type="match status" value="1"/>
</dbReference>
<dbReference type="PANTHER" id="PTHR33221">
    <property type="entry name" value="WINGED HELIX-TURN-HELIX TRANSCRIPTIONAL REGULATOR, RRF2 FAMILY"/>
    <property type="match status" value="1"/>
</dbReference>
<dbReference type="Pfam" id="PF02082">
    <property type="entry name" value="Rrf2"/>
    <property type="match status" value="1"/>
</dbReference>
<dbReference type="SUPFAM" id="SSF46785">
    <property type="entry name" value="Winged helix' DNA-binding domain"/>
    <property type="match status" value="1"/>
</dbReference>
<dbReference type="PROSITE" id="PS01332">
    <property type="entry name" value="HTH_RRF2_1"/>
    <property type="match status" value="1"/>
</dbReference>
<dbReference type="PROSITE" id="PS51197">
    <property type="entry name" value="HTH_RRF2_2"/>
    <property type="match status" value="1"/>
</dbReference>
<protein>
    <recommendedName>
        <fullName evidence="1">HTH-type transcriptional repressor NsrR</fullName>
    </recommendedName>
</protein>
<name>NSRR_ECO7I</name>
<evidence type="ECO:0000255" key="1">
    <source>
        <dbReference type="HAMAP-Rule" id="MF_01177"/>
    </source>
</evidence>